<sequence>MSEIFDAKAFLKTVTSQPGVYRMYDAGGTVIYVGKAKDLKKRLSSYFRSNLASRKTEALVAQIQHIDVTVTHTETEALLLEHNYIKLYQPRYNVLLRDDKSYPFIFLSGDTHPRLAMHRGAKHAKGEYFGPFPNGYAVRETLALLQKIFPIRQCENSVYRNRSRPCLQYQIGRCLGPCVAGLVSEEEYAQQVEYVRLFLSGKDDQVLTQLIARMEKASQDLAFEEAARIRDQIQAVRRVTEKQFVSNAGDDLDVIGVAFDAGMACVHVLFIRQGKVLGSRSYFPKVPGGTELGEVVETFVGQFYLQGSQMRTLPGEILLDFNLSDKTLLADSLSELAGRRIHVQTKPRGDRARYLKLARTNAATALITKLSQQSTITQRLTALAAVLKLPAIKRMECFDISHTMGEQTVASCVVFDANGPLRAEYRRYNIAGITPGDDYAAMNQVLRRRYGKAIEESKIPDVILIDGGKGQLAQAKAVFAELDVPWDKHRPLLLGVAKGADRKAGLEILFFEPEGEGFSLPPDSPALHVIQHIRDESHDHAIGGHRKKRAKVKNTSTLETIEGVGPKRRQMLLKYMGGLQGLRNASVEEIAKVPGISQGLAEKIFWSLKH</sequence>
<proteinExistence type="inferred from homology"/>
<accession>B5R110</accession>
<name>UVRC_SALEP</name>
<evidence type="ECO:0000255" key="1">
    <source>
        <dbReference type="HAMAP-Rule" id="MF_00203"/>
    </source>
</evidence>
<comment type="function">
    <text evidence="1">The UvrABC repair system catalyzes the recognition and processing of DNA lesions. UvrC both incises the 5' and 3' sides of the lesion. The N-terminal half is responsible for the 3' incision and the C-terminal half is responsible for the 5' incision.</text>
</comment>
<comment type="subunit">
    <text evidence="1">Interacts with UvrB in an incision complex.</text>
</comment>
<comment type="subcellular location">
    <subcellularLocation>
        <location evidence="1">Cytoplasm</location>
    </subcellularLocation>
</comment>
<comment type="similarity">
    <text evidence="1">Belongs to the UvrC family.</text>
</comment>
<dbReference type="EMBL" id="AM933172">
    <property type="protein sequence ID" value="CAR32645.1"/>
    <property type="molecule type" value="Genomic_DNA"/>
</dbReference>
<dbReference type="RefSeq" id="WP_001289463.1">
    <property type="nucleotide sequence ID" value="NC_011294.1"/>
</dbReference>
<dbReference type="SMR" id="B5R110"/>
<dbReference type="KEGG" id="set:SEN1060"/>
<dbReference type="HOGENOM" id="CLU_014841_3_0_6"/>
<dbReference type="Proteomes" id="UP000000613">
    <property type="component" value="Chromosome"/>
</dbReference>
<dbReference type="GO" id="GO:0005737">
    <property type="term" value="C:cytoplasm"/>
    <property type="evidence" value="ECO:0007669"/>
    <property type="project" value="UniProtKB-SubCell"/>
</dbReference>
<dbReference type="GO" id="GO:0009380">
    <property type="term" value="C:excinuclease repair complex"/>
    <property type="evidence" value="ECO:0007669"/>
    <property type="project" value="InterPro"/>
</dbReference>
<dbReference type="GO" id="GO:0003677">
    <property type="term" value="F:DNA binding"/>
    <property type="evidence" value="ECO:0007669"/>
    <property type="project" value="UniProtKB-UniRule"/>
</dbReference>
<dbReference type="GO" id="GO:0009381">
    <property type="term" value="F:excinuclease ABC activity"/>
    <property type="evidence" value="ECO:0007669"/>
    <property type="project" value="UniProtKB-UniRule"/>
</dbReference>
<dbReference type="GO" id="GO:0006289">
    <property type="term" value="P:nucleotide-excision repair"/>
    <property type="evidence" value="ECO:0007669"/>
    <property type="project" value="UniProtKB-UniRule"/>
</dbReference>
<dbReference type="GO" id="GO:0009432">
    <property type="term" value="P:SOS response"/>
    <property type="evidence" value="ECO:0007669"/>
    <property type="project" value="UniProtKB-UniRule"/>
</dbReference>
<dbReference type="CDD" id="cd10434">
    <property type="entry name" value="GIY-YIG_UvrC_Cho"/>
    <property type="match status" value="1"/>
</dbReference>
<dbReference type="FunFam" id="1.10.150.20:FF:000005">
    <property type="entry name" value="UvrABC system protein C"/>
    <property type="match status" value="1"/>
</dbReference>
<dbReference type="FunFam" id="3.30.420.340:FF:000001">
    <property type="entry name" value="UvrABC system protein C"/>
    <property type="match status" value="1"/>
</dbReference>
<dbReference type="FunFam" id="3.40.1440.10:FF:000001">
    <property type="entry name" value="UvrABC system protein C"/>
    <property type="match status" value="1"/>
</dbReference>
<dbReference type="FunFam" id="4.10.860.10:FF:000002">
    <property type="entry name" value="UvrABC system protein C"/>
    <property type="match status" value="1"/>
</dbReference>
<dbReference type="Gene3D" id="1.10.150.20">
    <property type="entry name" value="5' to 3' exonuclease, C-terminal subdomain"/>
    <property type="match status" value="1"/>
</dbReference>
<dbReference type="Gene3D" id="3.40.1440.10">
    <property type="entry name" value="GIY-YIG endonuclease"/>
    <property type="match status" value="1"/>
</dbReference>
<dbReference type="Gene3D" id="4.10.860.10">
    <property type="entry name" value="UVR domain"/>
    <property type="match status" value="1"/>
</dbReference>
<dbReference type="Gene3D" id="3.30.420.340">
    <property type="entry name" value="UvrC, RNAse H endonuclease domain"/>
    <property type="match status" value="1"/>
</dbReference>
<dbReference type="HAMAP" id="MF_00203">
    <property type="entry name" value="UvrC"/>
    <property type="match status" value="1"/>
</dbReference>
<dbReference type="InterPro" id="IPR000305">
    <property type="entry name" value="GIY-YIG_endonuc"/>
</dbReference>
<dbReference type="InterPro" id="IPR035901">
    <property type="entry name" value="GIY-YIG_endonuc_sf"/>
</dbReference>
<dbReference type="InterPro" id="IPR047296">
    <property type="entry name" value="GIY-YIG_UvrC_Cho"/>
</dbReference>
<dbReference type="InterPro" id="IPR003583">
    <property type="entry name" value="Hlx-hairpin-Hlx_DNA-bd_motif"/>
</dbReference>
<dbReference type="InterPro" id="IPR010994">
    <property type="entry name" value="RuvA_2-like"/>
</dbReference>
<dbReference type="InterPro" id="IPR001943">
    <property type="entry name" value="UVR_dom"/>
</dbReference>
<dbReference type="InterPro" id="IPR036876">
    <property type="entry name" value="UVR_dom_sf"/>
</dbReference>
<dbReference type="InterPro" id="IPR050066">
    <property type="entry name" value="UvrABC_protein_C"/>
</dbReference>
<dbReference type="InterPro" id="IPR004791">
    <property type="entry name" value="UvrC"/>
</dbReference>
<dbReference type="InterPro" id="IPR001162">
    <property type="entry name" value="UvrC_RNase_H_dom"/>
</dbReference>
<dbReference type="InterPro" id="IPR038476">
    <property type="entry name" value="UvrC_RNase_H_dom_sf"/>
</dbReference>
<dbReference type="NCBIfam" id="NF001824">
    <property type="entry name" value="PRK00558.1-5"/>
    <property type="match status" value="1"/>
</dbReference>
<dbReference type="NCBIfam" id="TIGR00194">
    <property type="entry name" value="uvrC"/>
    <property type="match status" value="1"/>
</dbReference>
<dbReference type="PANTHER" id="PTHR30562:SF1">
    <property type="entry name" value="UVRABC SYSTEM PROTEIN C"/>
    <property type="match status" value="1"/>
</dbReference>
<dbReference type="PANTHER" id="PTHR30562">
    <property type="entry name" value="UVRC/OXIDOREDUCTASE"/>
    <property type="match status" value="1"/>
</dbReference>
<dbReference type="Pfam" id="PF01541">
    <property type="entry name" value="GIY-YIG"/>
    <property type="match status" value="1"/>
</dbReference>
<dbReference type="Pfam" id="PF14520">
    <property type="entry name" value="HHH_5"/>
    <property type="match status" value="1"/>
</dbReference>
<dbReference type="Pfam" id="PF02151">
    <property type="entry name" value="UVR"/>
    <property type="match status" value="1"/>
</dbReference>
<dbReference type="Pfam" id="PF22920">
    <property type="entry name" value="UvrC_RNaseH"/>
    <property type="match status" value="1"/>
</dbReference>
<dbReference type="Pfam" id="PF08459">
    <property type="entry name" value="UvrC_RNaseH_dom"/>
    <property type="match status" value="1"/>
</dbReference>
<dbReference type="SMART" id="SM00465">
    <property type="entry name" value="GIYc"/>
    <property type="match status" value="1"/>
</dbReference>
<dbReference type="SMART" id="SM00278">
    <property type="entry name" value="HhH1"/>
    <property type="match status" value="2"/>
</dbReference>
<dbReference type="SUPFAM" id="SSF46600">
    <property type="entry name" value="C-terminal UvrC-binding domain of UvrB"/>
    <property type="match status" value="1"/>
</dbReference>
<dbReference type="SUPFAM" id="SSF82771">
    <property type="entry name" value="GIY-YIG endonuclease"/>
    <property type="match status" value="1"/>
</dbReference>
<dbReference type="SUPFAM" id="SSF47781">
    <property type="entry name" value="RuvA domain 2-like"/>
    <property type="match status" value="1"/>
</dbReference>
<dbReference type="PROSITE" id="PS50164">
    <property type="entry name" value="GIY_YIG"/>
    <property type="match status" value="1"/>
</dbReference>
<dbReference type="PROSITE" id="PS50151">
    <property type="entry name" value="UVR"/>
    <property type="match status" value="1"/>
</dbReference>
<dbReference type="PROSITE" id="PS50165">
    <property type="entry name" value="UVRC"/>
    <property type="match status" value="1"/>
</dbReference>
<organism>
    <name type="scientific">Salmonella enteritidis PT4 (strain P125109)</name>
    <dbReference type="NCBI Taxonomy" id="550537"/>
    <lineage>
        <taxon>Bacteria</taxon>
        <taxon>Pseudomonadati</taxon>
        <taxon>Pseudomonadota</taxon>
        <taxon>Gammaproteobacteria</taxon>
        <taxon>Enterobacterales</taxon>
        <taxon>Enterobacteriaceae</taxon>
        <taxon>Salmonella</taxon>
    </lineage>
</organism>
<keyword id="KW-0963">Cytoplasm</keyword>
<keyword id="KW-0227">DNA damage</keyword>
<keyword id="KW-0228">DNA excision</keyword>
<keyword id="KW-0234">DNA repair</keyword>
<keyword id="KW-0267">Excision nuclease</keyword>
<keyword id="KW-0742">SOS response</keyword>
<protein>
    <recommendedName>
        <fullName evidence="1">UvrABC system protein C</fullName>
        <shortName evidence="1">Protein UvrC</shortName>
    </recommendedName>
    <alternativeName>
        <fullName evidence="1">Excinuclease ABC subunit C</fullName>
    </alternativeName>
</protein>
<gene>
    <name evidence="1" type="primary">uvrC</name>
    <name type="ordered locus">SEN1060</name>
</gene>
<reference key="1">
    <citation type="journal article" date="2008" name="Genome Res.">
        <title>Comparative genome analysis of Salmonella enteritidis PT4 and Salmonella gallinarum 287/91 provides insights into evolutionary and host adaptation pathways.</title>
        <authorList>
            <person name="Thomson N.R."/>
            <person name="Clayton D.J."/>
            <person name="Windhorst D."/>
            <person name="Vernikos G."/>
            <person name="Davidson S."/>
            <person name="Churcher C."/>
            <person name="Quail M.A."/>
            <person name="Stevens M."/>
            <person name="Jones M.A."/>
            <person name="Watson M."/>
            <person name="Barron A."/>
            <person name="Layton A."/>
            <person name="Pickard D."/>
            <person name="Kingsley R.A."/>
            <person name="Bignell A."/>
            <person name="Clark L."/>
            <person name="Harris B."/>
            <person name="Ormond D."/>
            <person name="Abdellah Z."/>
            <person name="Brooks K."/>
            <person name="Cherevach I."/>
            <person name="Chillingworth T."/>
            <person name="Woodward J."/>
            <person name="Norberczak H."/>
            <person name="Lord A."/>
            <person name="Arrowsmith C."/>
            <person name="Jagels K."/>
            <person name="Moule S."/>
            <person name="Mungall K."/>
            <person name="Saunders M."/>
            <person name="Whitehead S."/>
            <person name="Chabalgoity J.A."/>
            <person name="Maskell D."/>
            <person name="Humphreys T."/>
            <person name="Roberts M."/>
            <person name="Barrow P.A."/>
            <person name="Dougan G."/>
            <person name="Parkhill J."/>
        </authorList>
    </citation>
    <scope>NUCLEOTIDE SEQUENCE [LARGE SCALE GENOMIC DNA]</scope>
    <source>
        <strain>P125109</strain>
    </source>
</reference>
<feature type="chain" id="PRO_1000099513" description="UvrABC system protein C">
    <location>
        <begin position="1"/>
        <end position="610"/>
    </location>
</feature>
<feature type="domain" description="GIY-YIG" evidence="1">
    <location>
        <begin position="16"/>
        <end position="94"/>
    </location>
</feature>
<feature type="domain" description="UVR" evidence="1">
    <location>
        <begin position="204"/>
        <end position="239"/>
    </location>
</feature>